<name>SECA_SHESR</name>
<keyword id="KW-0067">ATP-binding</keyword>
<keyword id="KW-0997">Cell inner membrane</keyword>
<keyword id="KW-1003">Cell membrane</keyword>
<keyword id="KW-0963">Cytoplasm</keyword>
<keyword id="KW-0472">Membrane</keyword>
<keyword id="KW-0479">Metal-binding</keyword>
<keyword id="KW-0547">Nucleotide-binding</keyword>
<keyword id="KW-0653">Protein transport</keyword>
<keyword id="KW-1278">Translocase</keyword>
<keyword id="KW-0811">Translocation</keyword>
<keyword id="KW-0813">Transport</keyword>
<keyword id="KW-0862">Zinc</keyword>
<comment type="function">
    <text evidence="1">Part of the Sec protein translocase complex. Interacts with the SecYEG preprotein conducting channel. Has a central role in coupling the hydrolysis of ATP to the transfer of proteins into and across the cell membrane, serving both as a receptor for the preprotein-SecB complex and as an ATP-driven molecular motor driving the stepwise translocation of polypeptide chains across the membrane.</text>
</comment>
<comment type="catalytic activity">
    <reaction evidence="1">
        <text>ATP + H2O + cellular proteinSide 1 = ADP + phosphate + cellular proteinSide 2.</text>
        <dbReference type="EC" id="7.4.2.8"/>
    </reaction>
</comment>
<comment type="cofactor">
    <cofactor evidence="1">
        <name>Zn(2+)</name>
        <dbReference type="ChEBI" id="CHEBI:29105"/>
    </cofactor>
    <text evidence="1">May bind 1 zinc ion per subunit.</text>
</comment>
<comment type="subunit">
    <text evidence="1">Monomer and homodimer. Part of the essential Sec protein translocation apparatus which comprises SecA, SecYEG and auxiliary proteins SecDF-YajC and YidC.</text>
</comment>
<comment type="subcellular location">
    <subcellularLocation>
        <location evidence="1">Cell inner membrane</location>
        <topology evidence="1">Peripheral membrane protein</topology>
        <orientation evidence="1">Cytoplasmic side</orientation>
    </subcellularLocation>
    <subcellularLocation>
        <location evidence="1">Cytoplasm</location>
    </subcellularLocation>
    <text evidence="1">Distribution is 50-50.</text>
</comment>
<comment type="similarity">
    <text evidence="1">Belongs to the SecA family.</text>
</comment>
<accession>Q0HZQ8</accession>
<feature type="chain" id="PRO_0000320999" description="Protein translocase subunit SecA">
    <location>
        <begin position="1"/>
        <end position="908"/>
    </location>
</feature>
<feature type="region of interest" description="Disordered" evidence="2">
    <location>
        <begin position="865"/>
        <end position="908"/>
    </location>
</feature>
<feature type="compositionally biased region" description="Basic and acidic residues" evidence="2">
    <location>
        <begin position="879"/>
        <end position="888"/>
    </location>
</feature>
<feature type="compositionally biased region" description="Basic residues" evidence="2">
    <location>
        <begin position="898"/>
        <end position="908"/>
    </location>
</feature>
<feature type="binding site" evidence="1">
    <location>
        <position position="87"/>
    </location>
    <ligand>
        <name>ATP</name>
        <dbReference type="ChEBI" id="CHEBI:30616"/>
    </ligand>
</feature>
<feature type="binding site" evidence="1">
    <location>
        <begin position="105"/>
        <end position="109"/>
    </location>
    <ligand>
        <name>ATP</name>
        <dbReference type="ChEBI" id="CHEBI:30616"/>
    </ligand>
</feature>
<feature type="binding site" evidence="1">
    <location>
        <position position="512"/>
    </location>
    <ligand>
        <name>ATP</name>
        <dbReference type="ChEBI" id="CHEBI:30616"/>
    </ligand>
</feature>
<feature type="binding site" evidence="1">
    <location>
        <position position="892"/>
    </location>
    <ligand>
        <name>Zn(2+)</name>
        <dbReference type="ChEBI" id="CHEBI:29105"/>
    </ligand>
</feature>
<feature type="binding site" evidence="1">
    <location>
        <position position="894"/>
    </location>
    <ligand>
        <name>Zn(2+)</name>
        <dbReference type="ChEBI" id="CHEBI:29105"/>
    </ligand>
</feature>
<feature type="binding site" evidence="1">
    <location>
        <position position="903"/>
    </location>
    <ligand>
        <name>Zn(2+)</name>
        <dbReference type="ChEBI" id="CHEBI:29105"/>
    </ligand>
</feature>
<feature type="binding site" evidence="1">
    <location>
        <position position="904"/>
    </location>
    <ligand>
        <name>Zn(2+)</name>
        <dbReference type="ChEBI" id="CHEBI:29105"/>
    </ligand>
</feature>
<reference key="1">
    <citation type="submission" date="2006-08" db="EMBL/GenBank/DDBJ databases">
        <title>Complete sequence of chromosome 1 of Shewanella sp. MR-7.</title>
        <authorList>
            <person name="Copeland A."/>
            <person name="Lucas S."/>
            <person name="Lapidus A."/>
            <person name="Barry K."/>
            <person name="Detter J.C."/>
            <person name="Glavina del Rio T."/>
            <person name="Hammon N."/>
            <person name="Israni S."/>
            <person name="Dalin E."/>
            <person name="Tice H."/>
            <person name="Pitluck S."/>
            <person name="Kiss H."/>
            <person name="Brettin T."/>
            <person name="Bruce D."/>
            <person name="Han C."/>
            <person name="Tapia R."/>
            <person name="Gilna P."/>
            <person name="Schmutz J."/>
            <person name="Larimer F."/>
            <person name="Land M."/>
            <person name="Hauser L."/>
            <person name="Kyrpides N."/>
            <person name="Mikhailova N."/>
            <person name="Nealson K."/>
            <person name="Konstantinidis K."/>
            <person name="Klappenbach J."/>
            <person name="Tiedje J."/>
            <person name="Richardson P."/>
        </authorList>
    </citation>
    <scope>NUCLEOTIDE SEQUENCE [LARGE SCALE GENOMIC DNA]</scope>
    <source>
        <strain>MR-7</strain>
    </source>
</reference>
<dbReference type="EC" id="7.4.2.8" evidence="1"/>
<dbReference type="EMBL" id="CP000444">
    <property type="protein sequence ID" value="ABI41397.1"/>
    <property type="molecule type" value="Genomic_DNA"/>
</dbReference>
<dbReference type="SMR" id="Q0HZQ8"/>
<dbReference type="KEGG" id="shm:Shewmr7_0394"/>
<dbReference type="HOGENOM" id="CLU_005314_3_0_6"/>
<dbReference type="GO" id="GO:0031522">
    <property type="term" value="C:cell envelope Sec protein transport complex"/>
    <property type="evidence" value="ECO:0007669"/>
    <property type="project" value="TreeGrafter"/>
</dbReference>
<dbReference type="GO" id="GO:0005829">
    <property type="term" value="C:cytosol"/>
    <property type="evidence" value="ECO:0007669"/>
    <property type="project" value="TreeGrafter"/>
</dbReference>
<dbReference type="GO" id="GO:0005886">
    <property type="term" value="C:plasma membrane"/>
    <property type="evidence" value="ECO:0007669"/>
    <property type="project" value="UniProtKB-SubCell"/>
</dbReference>
<dbReference type="GO" id="GO:0005524">
    <property type="term" value="F:ATP binding"/>
    <property type="evidence" value="ECO:0007669"/>
    <property type="project" value="UniProtKB-UniRule"/>
</dbReference>
<dbReference type="GO" id="GO:0046872">
    <property type="term" value="F:metal ion binding"/>
    <property type="evidence" value="ECO:0007669"/>
    <property type="project" value="UniProtKB-KW"/>
</dbReference>
<dbReference type="GO" id="GO:0008564">
    <property type="term" value="F:protein-exporting ATPase activity"/>
    <property type="evidence" value="ECO:0007669"/>
    <property type="project" value="UniProtKB-EC"/>
</dbReference>
<dbReference type="GO" id="GO:0065002">
    <property type="term" value="P:intracellular protein transmembrane transport"/>
    <property type="evidence" value="ECO:0007669"/>
    <property type="project" value="UniProtKB-UniRule"/>
</dbReference>
<dbReference type="GO" id="GO:0017038">
    <property type="term" value="P:protein import"/>
    <property type="evidence" value="ECO:0007669"/>
    <property type="project" value="InterPro"/>
</dbReference>
<dbReference type="GO" id="GO:0006605">
    <property type="term" value="P:protein targeting"/>
    <property type="evidence" value="ECO:0007669"/>
    <property type="project" value="UniProtKB-UniRule"/>
</dbReference>
<dbReference type="GO" id="GO:0043952">
    <property type="term" value="P:protein transport by the Sec complex"/>
    <property type="evidence" value="ECO:0007669"/>
    <property type="project" value="TreeGrafter"/>
</dbReference>
<dbReference type="CDD" id="cd17928">
    <property type="entry name" value="DEXDc_SecA"/>
    <property type="match status" value="1"/>
</dbReference>
<dbReference type="CDD" id="cd18803">
    <property type="entry name" value="SF2_C_secA"/>
    <property type="match status" value="1"/>
</dbReference>
<dbReference type="FunFam" id="1.10.3060.10:FF:000001">
    <property type="entry name" value="Preprotein translocase subunit SecA"/>
    <property type="match status" value="1"/>
</dbReference>
<dbReference type="FunFam" id="3.40.50.300:FF:000081">
    <property type="entry name" value="Preprotein translocase subunit SecA"/>
    <property type="match status" value="1"/>
</dbReference>
<dbReference type="FunFam" id="3.40.50.300:FF:000113">
    <property type="entry name" value="Preprotein translocase subunit SecA"/>
    <property type="match status" value="1"/>
</dbReference>
<dbReference type="FunFam" id="3.90.1440.10:FF:000001">
    <property type="entry name" value="Preprotein translocase subunit SecA"/>
    <property type="match status" value="1"/>
</dbReference>
<dbReference type="Gene3D" id="1.10.3060.10">
    <property type="entry name" value="Helical scaffold and wing domains of SecA"/>
    <property type="match status" value="1"/>
</dbReference>
<dbReference type="Gene3D" id="3.40.50.300">
    <property type="entry name" value="P-loop containing nucleotide triphosphate hydrolases"/>
    <property type="match status" value="2"/>
</dbReference>
<dbReference type="Gene3D" id="3.90.1440.10">
    <property type="entry name" value="SecA, preprotein cross-linking domain"/>
    <property type="match status" value="1"/>
</dbReference>
<dbReference type="HAMAP" id="MF_01382">
    <property type="entry name" value="SecA"/>
    <property type="match status" value="1"/>
</dbReference>
<dbReference type="InterPro" id="IPR014001">
    <property type="entry name" value="Helicase_ATP-bd"/>
</dbReference>
<dbReference type="InterPro" id="IPR001650">
    <property type="entry name" value="Helicase_C-like"/>
</dbReference>
<dbReference type="InterPro" id="IPR027417">
    <property type="entry name" value="P-loop_NTPase"/>
</dbReference>
<dbReference type="InterPro" id="IPR004027">
    <property type="entry name" value="SEC_C_motif"/>
</dbReference>
<dbReference type="InterPro" id="IPR000185">
    <property type="entry name" value="SecA"/>
</dbReference>
<dbReference type="InterPro" id="IPR020937">
    <property type="entry name" value="SecA_CS"/>
</dbReference>
<dbReference type="InterPro" id="IPR011115">
    <property type="entry name" value="SecA_DEAD"/>
</dbReference>
<dbReference type="InterPro" id="IPR014018">
    <property type="entry name" value="SecA_motor_DEAD"/>
</dbReference>
<dbReference type="InterPro" id="IPR011130">
    <property type="entry name" value="SecA_preprotein_X-link_dom"/>
</dbReference>
<dbReference type="InterPro" id="IPR044722">
    <property type="entry name" value="SecA_SF2_C"/>
</dbReference>
<dbReference type="InterPro" id="IPR011116">
    <property type="entry name" value="SecA_Wing/Scaffold"/>
</dbReference>
<dbReference type="InterPro" id="IPR036266">
    <property type="entry name" value="SecA_Wing/Scaffold_sf"/>
</dbReference>
<dbReference type="InterPro" id="IPR036670">
    <property type="entry name" value="SecA_X-link_sf"/>
</dbReference>
<dbReference type="NCBIfam" id="NF009538">
    <property type="entry name" value="PRK12904.1"/>
    <property type="match status" value="1"/>
</dbReference>
<dbReference type="NCBIfam" id="TIGR00963">
    <property type="entry name" value="secA"/>
    <property type="match status" value="1"/>
</dbReference>
<dbReference type="PANTHER" id="PTHR30612:SF0">
    <property type="entry name" value="CHLOROPLAST PROTEIN-TRANSPORTING ATPASE"/>
    <property type="match status" value="1"/>
</dbReference>
<dbReference type="PANTHER" id="PTHR30612">
    <property type="entry name" value="SECA INNER MEMBRANE COMPONENT OF SEC PROTEIN SECRETION SYSTEM"/>
    <property type="match status" value="1"/>
</dbReference>
<dbReference type="Pfam" id="PF21090">
    <property type="entry name" value="P-loop_SecA"/>
    <property type="match status" value="1"/>
</dbReference>
<dbReference type="Pfam" id="PF02810">
    <property type="entry name" value="SEC-C"/>
    <property type="match status" value="1"/>
</dbReference>
<dbReference type="Pfam" id="PF07517">
    <property type="entry name" value="SecA_DEAD"/>
    <property type="match status" value="1"/>
</dbReference>
<dbReference type="Pfam" id="PF01043">
    <property type="entry name" value="SecA_PP_bind"/>
    <property type="match status" value="1"/>
</dbReference>
<dbReference type="Pfam" id="PF07516">
    <property type="entry name" value="SecA_SW"/>
    <property type="match status" value="1"/>
</dbReference>
<dbReference type="PRINTS" id="PR00906">
    <property type="entry name" value="SECA"/>
</dbReference>
<dbReference type="SMART" id="SM00957">
    <property type="entry name" value="SecA_DEAD"/>
    <property type="match status" value="1"/>
</dbReference>
<dbReference type="SMART" id="SM00958">
    <property type="entry name" value="SecA_PP_bind"/>
    <property type="match status" value="1"/>
</dbReference>
<dbReference type="SUPFAM" id="SSF81886">
    <property type="entry name" value="Helical scaffold and wing domains of SecA"/>
    <property type="match status" value="1"/>
</dbReference>
<dbReference type="SUPFAM" id="SSF52540">
    <property type="entry name" value="P-loop containing nucleoside triphosphate hydrolases"/>
    <property type="match status" value="2"/>
</dbReference>
<dbReference type="SUPFAM" id="SSF81767">
    <property type="entry name" value="Pre-protein crosslinking domain of SecA"/>
    <property type="match status" value="1"/>
</dbReference>
<dbReference type="PROSITE" id="PS01312">
    <property type="entry name" value="SECA"/>
    <property type="match status" value="1"/>
</dbReference>
<dbReference type="PROSITE" id="PS51196">
    <property type="entry name" value="SECA_MOTOR_DEAD"/>
    <property type="match status" value="1"/>
</dbReference>
<proteinExistence type="inferred from homology"/>
<gene>
    <name evidence="1" type="primary">secA</name>
    <name type="ordered locus">Shewmr7_0394</name>
</gene>
<protein>
    <recommendedName>
        <fullName evidence="1">Protein translocase subunit SecA</fullName>
        <ecNumber evidence="1">7.4.2.8</ecNumber>
    </recommendedName>
</protein>
<organism>
    <name type="scientific">Shewanella sp. (strain MR-7)</name>
    <dbReference type="NCBI Taxonomy" id="60481"/>
    <lineage>
        <taxon>Bacteria</taxon>
        <taxon>Pseudomonadati</taxon>
        <taxon>Pseudomonadota</taxon>
        <taxon>Gammaproteobacteria</taxon>
        <taxon>Alteromonadales</taxon>
        <taxon>Shewanellaceae</taxon>
        <taxon>Shewanella</taxon>
    </lineage>
</organism>
<evidence type="ECO:0000255" key="1">
    <source>
        <dbReference type="HAMAP-Rule" id="MF_01382"/>
    </source>
</evidence>
<evidence type="ECO:0000256" key="2">
    <source>
        <dbReference type="SAM" id="MobiDB-lite"/>
    </source>
</evidence>
<sequence>MFGKLLTKVFGSRNDRTLKGLQKVVNKINALEADYEKLTDEQLKAKTAEFRERLAAGASLDSIMAEAFATVREASKRVFEMRHFDVQLLGGMVLDSNRIAEMRTGEGKTLTATLPAYLNALTGKGVHVITVNDYLARRDAENNRPLFEFLGLTVGINVAGLSQQAKKDAYNADITYGTNNEFGFDYLRDNMAFSPQERVQRPLHYALIDEVDSILIDEARTPLIISGAAEDSSELYIKINTLIPNLIRQDKEDSEEYVGEGDYSIDEKAKQVHFTERGQEKVENLLIERGMLAEGDSLYSAANISLLHHVNAALRAHTLFERDVDYIVQDGEVIIVDEHTGRTMPGRRWSEGLHQAVEAKEGVRIQNENQTLASITFQNYFRQYEKLAGMTGTADTEAFEFQHIYGLDTVVVPTNRPMVRKDMADLVYLTANEKYQAIIKDIKDCRERGQPVLVGTVSIEQSELLARLMVKEKIPHQVLNAKFHEKEAEIVAQAGRTGAVTIATNMAGRGTDIVLGGNWNMEIEALENPTAEQKAKIKADWQERHDAVVAAGGLHILGTERHESRRIDNQLRGRAGRQGDAGSSRFYLSMEDSLMRIFASDRVSGMMKKLGMEEGEAIEHPWVSRAIENAQRKVEARNFDIRKQLLEFDDVANDQRQVVYAQRNELMDAESIEDTIKNIQDDVISAVIDQYIPPQSVEELWDVPGLEQRLQQEFMLKLPIQEWLDKEDDLHEETLRERIITSWSDAYKAKEEMVGAPVLRQFEKAVMLQTLDGLWKEHLAAMDHLRQGIHLRGYAQKNPKQEYKRESFELFQQLLSTLKHDVISVLSKVQVQAQSDVEEMEARRREEDAKIQRDYQHAAAEALVGGDDGSDEMMAHTPMIRDGDKVGRNDPCPCGSGRKYKQCHGKLS</sequence>